<dbReference type="EC" id="1.1.1.86" evidence="1"/>
<dbReference type="EMBL" id="CP000576">
    <property type="protein sequence ID" value="ABO18124.1"/>
    <property type="molecule type" value="Genomic_DNA"/>
</dbReference>
<dbReference type="RefSeq" id="WP_011863430.1">
    <property type="nucleotide sequence ID" value="NC_009091.1"/>
</dbReference>
<dbReference type="SMR" id="A3PEE9"/>
<dbReference type="STRING" id="167546.P9301_15011"/>
<dbReference type="KEGG" id="pmg:P9301_15011"/>
<dbReference type="eggNOG" id="COG0059">
    <property type="taxonomic scope" value="Bacteria"/>
</dbReference>
<dbReference type="HOGENOM" id="CLU_033821_0_1_3"/>
<dbReference type="OrthoDB" id="9804088at2"/>
<dbReference type="UniPathway" id="UPA00047">
    <property type="reaction ID" value="UER00056"/>
</dbReference>
<dbReference type="UniPathway" id="UPA00049">
    <property type="reaction ID" value="UER00060"/>
</dbReference>
<dbReference type="Proteomes" id="UP000001430">
    <property type="component" value="Chromosome"/>
</dbReference>
<dbReference type="GO" id="GO:0005829">
    <property type="term" value="C:cytosol"/>
    <property type="evidence" value="ECO:0007669"/>
    <property type="project" value="TreeGrafter"/>
</dbReference>
<dbReference type="GO" id="GO:0004455">
    <property type="term" value="F:ketol-acid reductoisomerase activity"/>
    <property type="evidence" value="ECO:0007669"/>
    <property type="project" value="UniProtKB-UniRule"/>
</dbReference>
<dbReference type="GO" id="GO:0000287">
    <property type="term" value="F:magnesium ion binding"/>
    <property type="evidence" value="ECO:0007669"/>
    <property type="project" value="UniProtKB-UniRule"/>
</dbReference>
<dbReference type="GO" id="GO:0050661">
    <property type="term" value="F:NADP binding"/>
    <property type="evidence" value="ECO:0007669"/>
    <property type="project" value="InterPro"/>
</dbReference>
<dbReference type="GO" id="GO:0009097">
    <property type="term" value="P:isoleucine biosynthetic process"/>
    <property type="evidence" value="ECO:0007669"/>
    <property type="project" value="UniProtKB-UniRule"/>
</dbReference>
<dbReference type="GO" id="GO:0009099">
    <property type="term" value="P:L-valine biosynthetic process"/>
    <property type="evidence" value="ECO:0007669"/>
    <property type="project" value="UniProtKB-UniRule"/>
</dbReference>
<dbReference type="FunFam" id="3.40.50.720:FF:000023">
    <property type="entry name" value="Ketol-acid reductoisomerase (NADP(+))"/>
    <property type="match status" value="1"/>
</dbReference>
<dbReference type="Gene3D" id="6.10.240.10">
    <property type="match status" value="1"/>
</dbReference>
<dbReference type="Gene3D" id="3.40.50.720">
    <property type="entry name" value="NAD(P)-binding Rossmann-like Domain"/>
    <property type="match status" value="1"/>
</dbReference>
<dbReference type="HAMAP" id="MF_00435">
    <property type="entry name" value="IlvC"/>
    <property type="match status" value="1"/>
</dbReference>
<dbReference type="InterPro" id="IPR008927">
    <property type="entry name" value="6-PGluconate_DH-like_C_sf"/>
</dbReference>
<dbReference type="InterPro" id="IPR013023">
    <property type="entry name" value="KARI"/>
</dbReference>
<dbReference type="InterPro" id="IPR000506">
    <property type="entry name" value="KARI_C"/>
</dbReference>
<dbReference type="InterPro" id="IPR013116">
    <property type="entry name" value="KARI_N"/>
</dbReference>
<dbReference type="InterPro" id="IPR014359">
    <property type="entry name" value="KARI_prok"/>
</dbReference>
<dbReference type="InterPro" id="IPR036291">
    <property type="entry name" value="NAD(P)-bd_dom_sf"/>
</dbReference>
<dbReference type="NCBIfam" id="TIGR00465">
    <property type="entry name" value="ilvC"/>
    <property type="match status" value="1"/>
</dbReference>
<dbReference type="NCBIfam" id="NF004017">
    <property type="entry name" value="PRK05479.1"/>
    <property type="match status" value="1"/>
</dbReference>
<dbReference type="NCBIfam" id="NF009940">
    <property type="entry name" value="PRK13403.1"/>
    <property type="match status" value="1"/>
</dbReference>
<dbReference type="PANTHER" id="PTHR21371">
    <property type="entry name" value="KETOL-ACID REDUCTOISOMERASE, MITOCHONDRIAL"/>
    <property type="match status" value="1"/>
</dbReference>
<dbReference type="PANTHER" id="PTHR21371:SF1">
    <property type="entry name" value="KETOL-ACID REDUCTOISOMERASE, MITOCHONDRIAL"/>
    <property type="match status" value="1"/>
</dbReference>
<dbReference type="Pfam" id="PF01450">
    <property type="entry name" value="KARI_C"/>
    <property type="match status" value="1"/>
</dbReference>
<dbReference type="Pfam" id="PF07991">
    <property type="entry name" value="KARI_N"/>
    <property type="match status" value="1"/>
</dbReference>
<dbReference type="PIRSF" id="PIRSF000116">
    <property type="entry name" value="IlvC_gammaproteo"/>
    <property type="match status" value="1"/>
</dbReference>
<dbReference type="SUPFAM" id="SSF48179">
    <property type="entry name" value="6-phosphogluconate dehydrogenase C-terminal domain-like"/>
    <property type="match status" value="1"/>
</dbReference>
<dbReference type="SUPFAM" id="SSF51735">
    <property type="entry name" value="NAD(P)-binding Rossmann-fold domains"/>
    <property type="match status" value="1"/>
</dbReference>
<dbReference type="PROSITE" id="PS51851">
    <property type="entry name" value="KARI_C"/>
    <property type="match status" value="1"/>
</dbReference>
<dbReference type="PROSITE" id="PS51850">
    <property type="entry name" value="KARI_N"/>
    <property type="match status" value="1"/>
</dbReference>
<evidence type="ECO:0000255" key="1">
    <source>
        <dbReference type="HAMAP-Rule" id="MF_00435"/>
    </source>
</evidence>
<evidence type="ECO:0000255" key="2">
    <source>
        <dbReference type="PROSITE-ProRule" id="PRU01197"/>
    </source>
</evidence>
<evidence type="ECO:0000255" key="3">
    <source>
        <dbReference type="PROSITE-ProRule" id="PRU01198"/>
    </source>
</evidence>
<organism>
    <name type="scientific">Prochlorococcus marinus (strain MIT 9301)</name>
    <dbReference type="NCBI Taxonomy" id="167546"/>
    <lineage>
        <taxon>Bacteria</taxon>
        <taxon>Bacillati</taxon>
        <taxon>Cyanobacteriota</taxon>
        <taxon>Cyanophyceae</taxon>
        <taxon>Synechococcales</taxon>
        <taxon>Prochlorococcaceae</taxon>
        <taxon>Prochlorococcus</taxon>
    </lineage>
</organism>
<proteinExistence type="inferred from homology"/>
<sequence length="329" mass="36405">MTQLFYDTDADLSLLNNKTIAIIGYGSQGHAHALNLKDSGMDVIVGLYKGSKSESKAISDGLKVFSVSEACEKADWIMILLPDEFQKDVYLKEIEPNLKEGKILSFAHGFNIRFGLIKPPSFVDVVMIAPKGPGHTVRWEYQNGQGVPALFAVEQDSSGSARSLAMAYAKGIGGTRAGILETNFKEETETDLFGEQAVLCGGLSELVKSGFETLVEAGYQPELAYFECLHEVKLIVDLMVKGGLSQMRDSISNTAEYGDYVSGKRLINSDTKKEMQKILKDIQDGTFAKNFVEECDKDKPLMTKLREENSKHEIEKVGKSLRSMFSWLK</sequence>
<comment type="function">
    <text evidence="1">Involved in the biosynthesis of branched-chain amino acids (BCAA). Catalyzes an alkyl-migration followed by a ketol-acid reduction of (S)-2-acetolactate (S2AL) to yield (R)-2,3-dihydroxy-isovalerate. In the isomerase reaction, S2AL is rearranged via a Mg-dependent methyl migration to produce 3-hydroxy-3-methyl-2-ketobutyrate (HMKB). In the reductase reaction, this 2-ketoacid undergoes a metal-dependent reduction by NADPH to yield (R)-2,3-dihydroxy-isovalerate.</text>
</comment>
<comment type="catalytic activity">
    <reaction evidence="1">
        <text>(2R)-2,3-dihydroxy-3-methylbutanoate + NADP(+) = (2S)-2-acetolactate + NADPH + H(+)</text>
        <dbReference type="Rhea" id="RHEA:22068"/>
        <dbReference type="ChEBI" id="CHEBI:15378"/>
        <dbReference type="ChEBI" id="CHEBI:49072"/>
        <dbReference type="ChEBI" id="CHEBI:57783"/>
        <dbReference type="ChEBI" id="CHEBI:58349"/>
        <dbReference type="ChEBI" id="CHEBI:58476"/>
        <dbReference type="EC" id="1.1.1.86"/>
    </reaction>
</comment>
<comment type="catalytic activity">
    <reaction evidence="1">
        <text>(2R,3R)-2,3-dihydroxy-3-methylpentanoate + NADP(+) = (S)-2-ethyl-2-hydroxy-3-oxobutanoate + NADPH + H(+)</text>
        <dbReference type="Rhea" id="RHEA:13493"/>
        <dbReference type="ChEBI" id="CHEBI:15378"/>
        <dbReference type="ChEBI" id="CHEBI:49256"/>
        <dbReference type="ChEBI" id="CHEBI:49258"/>
        <dbReference type="ChEBI" id="CHEBI:57783"/>
        <dbReference type="ChEBI" id="CHEBI:58349"/>
        <dbReference type="EC" id="1.1.1.86"/>
    </reaction>
</comment>
<comment type="cofactor">
    <cofactor evidence="1">
        <name>Mg(2+)</name>
        <dbReference type="ChEBI" id="CHEBI:18420"/>
    </cofactor>
    <text evidence="1">Binds 2 magnesium ions per subunit.</text>
</comment>
<comment type="pathway">
    <text evidence="1">Amino-acid biosynthesis; L-isoleucine biosynthesis; L-isoleucine from 2-oxobutanoate: step 2/4.</text>
</comment>
<comment type="pathway">
    <text evidence="1">Amino-acid biosynthesis; L-valine biosynthesis; L-valine from pyruvate: step 2/4.</text>
</comment>
<comment type="similarity">
    <text evidence="1">Belongs to the ketol-acid reductoisomerase family.</text>
</comment>
<feature type="chain" id="PRO_1000050553" description="Ketol-acid reductoisomerase (NADP(+))">
    <location>
        <begin position="1"/>
        <end position="329"/>
    </location>
</feature>
<feature type="domain" description="KARI N-terminal Rossmann" evidence="2">
    <location>
        <begin position="2"/>
        <end position="182"/>
    </location>
</feature>
<feature type="domain" description="KARI C-terminal knotted" evidence="3">
    <location>
        <begin position="183"/>
        <end position="328"/>
    </location>
</feature>
<feature type="active site" evidence="1">
    <location>
        <position position="108"/>
    </location>
</feature>
<feature type="binding site" evidence="1">
    <location>
        <begin position="25"/>
        <end position="28"/>
    </location>
    <ligand>
        <name>NADP(+)</name>
        <dbReference type="ChEBI" id="CHEBI:58349"/>
    </ligand>
</feature>
<feature type="binding site" evidence="1">
    <location>
        <position position="51"/>
    </location>
    <ligand>
        <name>NADP(+)</name>
        <dbReference type="ChEBI" id="CHEBI:58349"/>
    </ligand>
</feature>
<feature type="binding site" evidence="1">
    <location>
        <position position="53"/>
    </location>
    <ligand>
        <name>NADP(+)</name>
        <dbReference type="ChEBI" id="CHEBI:58349"/>
    </ligand>
</feature>
<feature type="binding site" evidence="1">
    <location>
        <begin position="83"/>
        <end position="86"/>
    </location>
    <ligand>
        <name>NADP(+)</name>
        <dbReference type="ChEBI" id="CHEBI:58349"/>
    </ligand>
</feature>
<feature type="binding site" evidence="1">
    <location>
        <position position="134"/>
    </location>
    <ligand>
        <name>NADP(+)</name>
        <dbReference type="ChEBI" id="CHEBI:58349"/>
    </ligand>
</feature>
<feature type="binding site" evidence="1">
    <location>
        <position position="191"/>
    </location>
    <ligand>
        <name>Mg(2+)</name>
        <dbReference type="ChEBI" id="CHEBI:18420"/>
        <label>1</label>
    </ligand>
</feature>
<feature type="binding site" evidence="1">
    <location>
        <position position="191"/>
    </location>
    <ligand>
        <name>Mg(2+)</name>
        <dbReference type="ChEBI" id="CHEBI:18420"/>
        <label>2</label>
    </ligand>
</feature>
<feature type="binding site" evidence="1">
    <location>
        <position position="195"/>
    </location>
    <ligand>
        <name>Mg(2+)</name>
        <dbReference type="ChEBI" id="CHEBI:18420"/>
        <label>1</label>
    </ligand>
</feature>
<feature type="binding site" evidence="1">
    <location>
        <position position="227"/>
    </location>
    <ligand>
        <name>Mg(2+)</name>
        <dbReference type="ChEBI" id="CHEBI:18420"/>
        <label>2</label>
    </ligand>
</feature>
<feature type="binding site" evidence="1">
    <location>
        <position position="231"/>
    </location>
    <ligand>
        <name>Mg(2+)</name>
        <dbReference type="ChEBI" id="CHEBI:18420"/>
        <label>2</label>
    </ligand>
</feature>
<feature type="binding site" evidence="1">
    <location>
        <position position="252"/>
    </location>
    <ligand>
        <name>substrate</name>
    </ligand>
</feature>
<accession>A3PEE9</accession>
<name>ILVC_PROM0</name>
<gene>
    <name evidence="1" type="primary">ilvC</name>
    <name type="ordered locus">P9301_15011</name>
</gene>
<reference key="1">
    <citation type="journal article" date="2007" name="PLoS Genet.">
        <title>Patterns and implications of gene gain and loss in the evolution of Prochlorococcus.</title>
        <authorList>
            <person name="Kettler G.C."/>
            <person name="Martiny A.C."/>
            <person name="Huang K."/>
            <person name="Zucker J."/>
            <person name="Coleman M.L."/>
            <person name="Rodrigue S."/>
            <person name="Chen F."/>
            <person name="Lapidus A."/>
            <person name="Ferriera S."/>
            <person name="Johnson J."/>
            <person name="Steglich C."/>
            <person name="Church G.M."/>
            <person name="Richardson P."/>
            <person name="Chisholm S.W."/>
        </authorList>
    </citation>
    <scope>NUCLEOTIDE SEQUENCE [LARGE SCALE GENOMIC DNA]</scope>
    <source>
        <strain>MIT 9301</strain>
    </source>
</reference>
<protein>
    <recommendedName>
        <fullName evidence="1">Ketol-acid reductoisomerase (NADP(+))</fullName>
        <shortName evidence="1">KARI</shortName>
        <ecNumber evidence="1">1.1.1.86</ecNumber>
    </recommendedName>
    <alternativeName>
        <fullName evidence="1">Acetohydroxy-acid isomeroreductase</fullName>
        <shortName evidence="1">AHIR</shortName>
    </alternativeName>
    <alternativeName>
        <fullName evidence="1">Alpha-keto-beta-hydroxylacyl reductoisomerase</fullName>
    </alternativeName>
    <alternativeName>
        <fullName evidence="1">Ketol-acid reductoisomerase type 1</fullName>
    </alternativeName>
    <alternativeName>
        <fullName evidence="1">Ketol-acid reductoisomerase type I</fullName>
    </alternativeName>
</protein>
<keyword id="KW-0028">Amino-acid biosynthesis</keyword>
<keyword id="KW-0100">Branched-chain amino acid biosynthesis</keyword>
<keyword id="KW-0460">Magnesium</keyword>
<keyword id="KW-0479">Metal-binding</keyword>
<keyword id="KW-0521">NADP</keyword>
<keyword id="KW-0560">Oxidoreductase</keyword>
<keyword id="KW-1185">Reference proteome</keyword>